<comment type="function">
    <text evidence="1">RNaseP catalyzes the removal of the 5'-leader sequence from pre-tRNA to produce the mature 5'-terminus. It can also cleave other RNA substrates such as 4.5S RNA. The protein component plays an auxiliary but essential role in vivo by binding to the 5'-leader sequence and broadening the substrate specificity of the ribozyme.</text>
</comment>
<comment type="catalytic activity">
    <reaction evidence="1">
        <text>Endonucleolytic cleavage of RNA, removing 5'-extranucleotides from tRNA precursor.</text>
        <dbReference type="EC" id="3.1.26.5"/>
    </reaction>
</comment>
<comment type="subunit">
    <text evidence="1">Consists of a catalytic RNA component (M1 or rnpB) and a protein subunit.</text>
</comment>
<comment type="similarity">
    <text evidence="1">Belongs to the RnpA family.</text>
</comment>
<reference key="1">
    <citation type="journal article" date="2000" name="Nature">
        <title>The genome sequence of the food-borne pathogen Campylobacter jejuni reveals hypervariable sequences.</title>
        <authorList>
            <person name="Parkhill J."/>
            <person name="Wren B.W."/>
            <person name="Mungall K.L."/>
            <person name="Ketley J.M."/>
            <person name="Churcher C.M."/>
            <person name="Basham D."/>
            <person name="Chillingworth T."/>
            <person name="Davies R.M."/>
            <person name="Feltwell T."/>
            <person name="Holroyd S."/>
            <person name="Jagels K."/>
            <person name="Karlyshev A.V."/>
            <person name="Moule S."/>
            <person name="Pallen M.J."/>
            <person name="Penn C.W."/>
            <person name="Quail M.A."/>
            <person name="Rajandream M.A."/>
            <person name="Rutherford K.M."/>
            <person name="van Vliet A.H.M."/>
            <person name="Whitehead S."/>
            <person name="Barrell B.G."/>
        </authorList>
    </citation>
    <scope>NUCLEOTIDE SEQUENCE [LARGE SCALE GENOMIC DNA]</scope>
    <source>
        <strain>ATCC 700819 / NCTC 11168</strain>
    </source>
</reference>
<protein>
    <recommendedName>
        <fullName evidence="1">Ribonuclease P protein component</fullName>
        <shortName evidence="1">RNase P protein</shortName>
        <shortName evidence="1">RNaseP protein</shortName>
        <ecNumber evidence="1">3.1.26.5</ecNumber>
    </recommendedName>
    <alternativeName>
        <fullName evidence="1">Protein C5</fullName>
    </alternativeName>
</protein>
<dbReference type="EC" id="3.1.26.5" evidence="1"/>
<dbReference type="EMBL" id="AL111168">
    <property type="protein sequence ID" value="CAL35080.1"/>
    <property type="molecule type" value="Genomic_DNA"/>
</dbReference>
<dbReference type="PIR" id="G81370">
    <property type="entry name" value="G81370"/>
</dbReference>
<dbReference type="RefSeq" id="WP_002853349.1">
    <property type="nucleotide sequence ID" value="NZ_SZUC01000001.1"/>
</dbReference>
<dbReference type="RefSeq" id="YP_002344358.1">
    <property type="nucleotide sequence ID" value="NC_002163.1"/>
</dbReference>
<dbReference type="SMR" id="Q9PNX5"/>
<dbReference type="IntAct" id="Q9PNX5">
    <property type="interactions" value="17"/>
</dbReference>
<dbReference type="STRING" id="192222.Cj0960c"/>
<dbReference type="PaxDb" id="192222-Cj0960c"/>
<dbReference type="EnsemblBacteria" id="CAL35080">
    <property type="protein sequence ID" value="CAL35080"/>
    <property type="gene ID" value="Cj0960c"/>
</dbReference>
<dbReference type="GeneID" id="905252"/>
<dbReference type="KEGG" id="cje:Cj0960c"/>
<dbReference type="PATRIC" id="fig|192222.6.peg.944"/>
<dbReference type="eggNOG" id="COG0594">
    <property type="taxonomic scope" value="Bacteria"/>
</dbReference>
<dbReference type="HOGENOM" id="CLU_117179_9_5_7"/>
<dbReference type="OrthoDB" id="9810867at2"/>
<dbReference type="Proteomes" id="UP000000799">
    <property type="component" value="Chromosome"/>
</dbReference>
<dbReference type="GO" id="GO:0030677">
    <property type="term" value="C:ribonuclease P complex"/>
    <property type="evidence" value="ECO:0007669"/>
    <property type="project" value="TreeGrafter"/>
</dbReference>
<dbReference type="GO" id="GO:0042781">
    <property type="term" value="F:3'-tRNA processing endoribonuclease activity"/>
    <property type="evidence" value="ECO:0007669"/>
    <property type="project" value="TreeGrafter"/>
</dbReference>
<dbReference type="GO" id="GO:0004526">
    <property type="term" value="F:ribonuclease P activity"/>
    <property type="evidence" value="ECO:0007669"/>
    <property type="project" value="UniProtKB-UniRule"/>
</dbReference>
<dbReference type="GO" id="GO:0000049">
    <property type="term" value="F:tRNA binding"/>
    <property type="evidence" value="ECO:0007669"/>
    <property type="project" value="UniProtKB-UniRule"/>
</dbReference>
<dbReference type="GO" id="GO:0001682">
    <property type="term" value="P:tRNA 5'-leader removal"/>
    <property type="evidence" value="ECO:0007669"/>
    <property type="project" value="UniProtKB-UniRule"/>
</dbReference>
<dbReference type="Gene3D" id="3.30.230.10">
    <property type="match status" value="1"/>
</dbReference>
<dbReference type="HAMAP" id="MF_00227">
    <property type="entry name" value="RNase_P"/>
    <property type="match status" value="1"/>
</dbReference>
<dbReference type="InterPro" id="IPR020568">
    <property type="entry name" value="Ribosomal_Su5_D2-typ_SF"/>
</dbReference>
<dbReference type="InterPro" id="IPR014721">
    <property type="entry name" value="Ribsml_uS5_D2-typ_fold_subgr"/>
</dbReference>
<dbReference type="InterPro" id="IPR000100">
    <property type="entry name" value="RNase_P"/>
</dbReference>
<dbReference type="InterPro" id="IPR020539">
    <property type="entry name" value="RNase_P_CS"/>
</dbReference>
<dbReference type="NCBIfam" id="TIGR00188">
    <property type="entry name" value="rnpA"/>
    <property type="match status" value="1"/>
</dbReference>
<dbReference type="PANTHER" id="PTHR33992">
    <property type="entry name" value="RIBONUCLEASE P PROTEIN COMPONENT"/>
    <property type="match status" value="1"/>
</dbReference>
<dbReference type="PANTHER" id="PTHR33992:SF1">
    <property type="entry name" value="RIBONUCLEASE P PROTEIN COMPONENT"/>
    <property type="match status" value="1"/>
</dbReference>
<dbReference type="Pfam" id="PF00825">
    <property type="entry name" value="Ribonuclease_P"/>
    <property type="match status" value="1"/>
</dbReference>
<dbReference type="SUPFAM" id="SSF54211">
    <property type="entry name" value="Ribosomal protein S5 domain 2-like"/>
    <property type="match status" value="1"/>
</dbReference>
<dbReference type="PROSITE" id="PS00648">
    <property type="entry name" value="RIBONUCLEASE_P"/>
    <property type="match status" value="1"/>
</dbReference>
<proteinExistence type="inferred from homology"/>
<evidence type="ECO:0000255" key="1">
    <source>
        <dbReference type="HAMAP-Rule" id="MF_00227"/>
    </source>
</evidence>
<organism>
    <name type="scientific">Campylobacter jejuni subsp. jejuni serotype O:2 (strain ATCC 700819 / NCTC 11168)</name>
    <dbReference type="NCBI Taxonomy" id="192222"/>
    <lineage>
        <taxon>Bacteria</taxon>
        <taxon>Pseudomonadati</taxon>
        <taxon>Campylobacterota</taxon>
        <taxon>Epsilonproteobacteria</taxon>
        <taxon>Campylobacterales</taxon>
        <taxon>Campylobacteraceae</taxon>
        <taxon>Campylobacter</taxon>
    </lineage>
</organism>
<keyword id="KW-0255">Endonuclease</keyword>
<keyword id="KW-0378">Hydrolase</keyword>
<keyword id="KW-0540">Nuclease</keyword>
<keyword id="KW-1185">Reference proteome</keyword>
<keyword id="KW-0694">RNA-binding</keyword>
<keyword id="KW-0819">tRNA processing</keyword>
<gene>
    <name evidence="1" type="primary">rnpA</name>
    <name type="ordered locus">Cj0960c</name>
</gene>
<feature type="chain" id="PRO_0000198440" description="Ribonuclease P protein component">
    <location>
        <begin position="1"/>
        <end position="108"/>
    </location>
</feature>
<name>RNPA_CAMJE</name>
<sequence>MKNFDKFSTNEEFSSVYKVGKKWHCEGVIIFYLNSYEKKIAVVASKKVGKAVVRNRSKRILRALFAKFERYLQDGKYIFVAKNEITELSFSRLEKNLKWGLKKLECFK</sequence>
<accession>Q9PNX5</accession>
<accession>Q0P9T9</accession>